<dbReference type="EC" id="6.3.4.2" evidence="1"/>
<dbReference type="EMBL" id="CP000236">
    <property type="protein sequence ID" value="ABD45130.1"/>
    <property type="molecule type" value="Genomic_DNA"/>
</dbReference>
<dbReference type="RefSeq" id="WP_006010128.1">
    <property type="nucleotide sequence ID" value="NC_007799.1"/>
</dbReference>
<dbReference type="SMR" id="Q2GHT7"/>
<dbReference type="STRING" id="205920.ECH_0171"/>
<dbReference type="MEROPS" id="C26.964"/>
<dbReference type="KEGG" id="ech:ECH_0171"/>
<dbReference type="eggNOG" id="COG0504">
    <property type="taxonomic scope" value="Bacteria"/>
</dbReference>
<dbReference type="HOGENOM" id="CLU_011675_5_0_5"/>
<dbReference type="OrthoDB" id="9801107at2"/>
<dbReference type="UniPathway" id="UPA00159">
    <property type="reaction ID" value="UER00277"/>
</dbReference>
<dbReference type="Proteomes" id="UP000008320">
    <property type="component" value="Chromosome"/>
</dbReference>
<dbReference type="GO" id="GO:0005829">
    <property type="term" value="C:cytosol"/>
    <property type="evidence" value="ECO:0007669"/>
    <property type="project" value="TreeGrafter"/>
</dbReference>
<dbReference type="GO" id="GO:0005524">
    <property type="term" value="F:ATP binding"/>
    <property type="evidence" value="ECO:0007669"/>
    <property type="project" value="UniProtKB-KW"/>
</dbReference>
<dbReference type="GO" id="GO:0003883">
    <property type="term" value="F:CTP synthase activity"/>
    <property type="evidence" value="ECO:0007669"/>
    <property type="project" value="UniProtKB-UniRule"/>
</dbReference>
<dbReference type="GO" id="GO:0004359">
    <property type="term" value="F:glutaminase activity"/>
    <property type="evidence" value="ECO:0007669"/>
    <property type="project" value="RHEA"/>
</dbReference>
<dbReference type="GO" id="GO:0042802">
    <property type="term" value="F:identical protein binding"/>
    <property type="evidence" value="ECO:0007669"/>
    <property type="project" value="TreeGrafter"/>
</dbReference>
<dbReference type="GO" id="GO:0046872">
    <property type="term" value="F:metal ion binding"/>
    <property type="evidence" value="ECO:0007669"/>
    <property type="project" value="UniProtKB-KW"/>
</dbReference>
<dbReference type="GO" id="GO:0044210">
    <property type="term" value="P:'de novo' CTP biosynthetic process"/>
    <property type="evidence" value="ECO:0007669"/>
    <property type="project" value="UniProtKB-UniRule"/>
</dbReference>
<dbReference type="GO" id="GO:0019856">
    <property type="term" value="P:pyrimidine nucleobase biosynthetic process"/>
    <property type="evidence" value="ECO:0007669"/>
    <property type="project" value="TreeGrafter"/>
</dbReference>
<dbReference type="CDD" id="cd03113">
    <property type="entry name" value="CTPS_N"/>
    <property type="match status" value="1"/>
</dbReference>
<dbReference type="CDD" id="cd01746">
    <property type="entry name" value="GATase1_CTP_Synthase"/>
    <property type="match status" value="1"/>
</dbReference>
<dbReference type="FunFam" id="3.40.50.300:FF:000009">
    <property type="entry name" value="CTP synthase"/>
    <property type="match status" value="1"/>
</dbReference>
<dbReference type="FunFam" id="3.40.50.880:FF:000002">
    <property type="entry name" value="CTP synthase"/>
    <property type="match status" value="1"/>
</dbReference>
<dbReference type="Gene3D" id="3.40.50.880">
    <property type="match status" value="1"/>
</dbReference>
<dbReference type="Gene3D" id="3.40.50.300">
    <property type="entry name" value="P-loop containing nucleotide triphosphate hydrolases"/>
    <property type="match status" value="1"/>
</dbReference>
<dbReference type="HAMAP" id="MF_01227">
    <property type="entry name" value="PyrG"/>
    <property type="match status" value="1"/>
</dbReference>
<dbReference type="InterPro" id="IPR029062">
    <property type="entry name" value="Class_I_gatase-like"/>
</dbReference>
<dbReference type="InterPro" id="IPR004468">
    <property type="entry name" value="CTP_synthase"/>
</dbReference>
<dbReference type="InterPro" id="IPR017456">
    <property type="entry name" value="CTP_synthase_N"/>
</dbReference>
<dbReference type="InterPro" id="IPR017926">
    <property type="entry name" value="GATASE"/>
</dbReference>
<dbReference type="InterPro" id="IPR033828">
    <property type="entry name" value="GATase1_CTP_Synthase"/>
</dbReference>
<dbReference type="InterPro" id="IPR027417">
    <property type="entry name" value="P-loop_NTPase"/>
</dbReference>
<dbReference type="NCBIfam" id="NF003792">
    <property type="entry name" value="PRK05380.1"/>
    <property type="match status" value="1"/>
</dbReference>
<dbReference type="NCBIfam" id="TIGR00337">
    <property type="entry name" value="PyrG"/>
    <property type="match status" value="1"/>
</dbReference>
<dbReference type="PANTHER" id="PTHR11550">
    <property type="entry name" value="CTP SYNTHASE"/>
    <property type="match status" value="1"/>
</dbReference>
<dbReference type="PANTHER" id="PTHR11550:SF0">
    <property type="entry name" value="CTP SYNTHASE-RELATED"/>
    <property type="match status" value="1"/>
</dbReference>
<dbReference type="Pfam" id="PF06418">
    <property type="entry name" value="CTP_synth_N"/>
    <property type="match status" value="1"/>
</dbReference>
<dbReference type="Pfam" id="PF00117">
    <property type="entry name" value="GATase"/>
    <property type="match status" value="1"/>
</dbReference>
<dbReference type="SUPFAM" id="SSF52317">
    <property type="entry name" value="Class I glutamine amidotransferase-like"/>
    <property type="match status" value="1"/>
</dbReference>
<dbReference type="SUPFAM" id="SSF52540">
    <property type="entry name" value="P-loop containing nucleoside triphosphate hydrolases"/>
    <property type="match status" value="1"/>
</dbReference>
<dbReference type="PROSITE" id="PS51273">
    <property type="entry name" value="GATASE_TYPE_1"/>
    <property type="match status" value="1"/>
</dbReference>
<name>PYRG_EHRCR</name>
<gene>
    <name evidence="1" type="primary">pyrG</name>
    <name type="ordered locus">ECH_0171</name>
</gene>
<proteinExistence type="inferred from homology"/>
<feature type="chain" id="PRO_0000266112" description="CTP synthase">
    <location>
        <begin position="1"/>
        <end position="532"/>
    </location>
</feature>
<feature type="domain" description="Glutamine amidotransferase type-1" evidence="1">
    <location>
        <begin position="294"/>
        <end position="532"/>
    </location>
</feature>
<feature type="region of interest" description="Amidoligase domain" evidence="1">
    <location>
        <begin position="1"/>
        <end position="269"/>
    </location>
</feature>
<feature type="active site" description="Nucleophile; for glutamine hydrolysis" evidence="1">
    <location>
        <position position="382"/>
    </location>
</feature>
<feature type="active site" evidence="1">
    <location>
        <position position="509"/>
    </location>
</feature>
<feature type="active site" evidence="1">
    <location>
        <position position="511"/>
    </location>
</feature>
<feature type="binding site" evidence="1">
    <location>
        <position position="17"/>
    </location>
    <ligand>
        <name>CTP</name>
        <dbReference type="ChEBI" id="CHEBI:37563"/>
        <note>allosteric inhibitor</note>
    </ligand>
</feature>
<feature type="binding site" evidence="1">
    <location>
        <position position="17"/>
    </location>
    <ligand>
        <name>UTP</name>
        <dbReference type="ChEBI" id="CHEBI:46398"/>
    </ligand>
</feature>
<feature type="binding site" evidence="1">
    <location>
        <begin position="18"/>
        <end position="23"/>
    </location>
    <ligand>
        <name>ATP</name>
        <dbReference type="ChEBI" id="CHEBI:30616"/>
    </ligand>
</feature>
<feature type="binding site" evidence="1">
    <location>
        <position position="75"/>
    </location>
    <ligand>
        <name>ATP</name>
        <dbReference type="ChEBI" id="CHEBI:30616"/>
    </ligand>
</feature>
<feature type="binding site" evidence="1">
    <location>
        <position position="75"/>
    </location>
    <ligand>
        <name>Mg(2+)</name>
        <dbReference type="ChEBI" id="CHEBI:18420"/>
    </ligand>
</feature>
<feature type="binding site" evidence="1">
    <location>
        <position position="143"/>
    </location>
    <ligand>
        <name>Mg(2+)</name>
        <dbReference type="ChEBI" id="CHEBI:18420"/>
    </ligand>
</feature>
<feature type="binding site" evidence="1">
    <location>
        <begin position="150"/>
        <end position="152"/>
    </location>
    <ligand>
        <name>CTP</name>
        <dbReference type="ChEBI" id="CHEBI:37563"/>
        <note>allosteric inhibitor</note>
    </ligand>
</feature>
<feature type="binding site" evidence="1">
    <location>
        <begin position="190"/>
        <end position="195"/>
    </location>
    <ligand>
        <name>CTP</name>
        <dbReference type="ChEBI" id="CHEBI:37563"/>
        <note>allosteric inhibitor</note>
    </ligand>
</feature>
<feature type="binding site" evidence="1">
    <location>
        <begin position="190"/>
        <end position="195"/>
    </location>
    <ligand>
        <name>UTP</name>
        <dbReference type="ChEBI" id="CHEBI:46398"/>
    </ligand>
</feature>
<feature type="binding site" evidence="1">
    <location>
        <position position="226"/>
    </location>
    <ligand>
        <name>CTP</name>
        <dbReference type="ChEBI" id="CHEBI:37563"/>
        <note>allosteric inhibitor</note>
    </ligand>
</feature>
<feature type="binding site" evidence="1">
    <location>
        <position position="226"/>
    </location>
    <ligand>
        <name>UTP</name>
        <dbReference type="ChEBI" id="CHEBI:46398"/>
    </ligand>
</feature>
<feature type="binding site" evidence="1">
    <location>
        <position position="355"/>
    </location>
    <ligand>
        <name>L-glutamine</name>
        <dbReference type="ChEBI" id="CHEBI:58359"/>
    </ligand>
</feature>
<feature type="binding site" evidence="1">
    <location>
        <begin position="383"/>
        <end position="386"/>
    </location>
    <ligand>
        <name>L-glutamine</name>
        <dbReference type="ChEBI" id="CHEBI:58359"/>
    </ligand>
</feature>
<feature type="binding site" evidence="1">
    <location>
        <position position="406"/>
    </location>
    <ligand>
        <name>L-glutamine</name>
        <dbReference type="ChEBI" id="CHEBI:58359"/>
    </ligand>
</feature>
<feature type="binding site" evidence="1">
    <location>
        <position position="462"/>
    </location>
    <ligand>
        <name>L-glutamine</name>
        <dbReference type="ChEBI" id="CHEBI:58359"/>
    </ligand>
</feature>
<reference key="1">
    <citation type="journal article" date="2006" name="PLoS Genet.">
        <title>Comparative genomics of emerging human ehrlichiosis agents.</title>
        <authorList>
            <person name="Dunning Hotopp J.C."/>
            <person name="Lin M."/>
            <person name="Madupu R."/>
            <person name="Crabtree J."/>
            <person name="Angiuoli S.V."/>
            <person name="Eisen J.A."/>
            <person name="Seshadri R."/>
            <person name="Ren Q."/>
            <person name="Wu M."/>
            <person name="Utterback T.R."/>
            <person name="Smith S."/>
            <person name="Lewis M."/>
            <person name="Khouri H."/>
            <person name="Zhang C."/>
            <person name="Niu H."/>
            <person name="Lin Q."/>
            <person name="Ohashi N."/>
            <person name="Zhi N."/>
            <person name="Nelson W.C."/>
            <person name="Brinkac L.M."/>
            <person name="Dodson R.J."/>
            <person name="Rosovitz M.J."/>
            <person name="Sundaram J.P."/>
            <person name="Daugherty S.C."/>
            <person name="Davidsen T."/>
            <person name="Durkin A.S."/>
            <person name="Gwinn M.L."/>
            <person name="Haft D.H."/>
            <person name="Selengut J.D."/>
            <person name="Sullivan S.A."/>
            <person name="Zafar N."/>
            <person name="Zhou L."/>
            <person name="Benahmed F."/>
            <person name="Forberger H."/>
            <person name="Halpin R."/>
            <person name="Mulligan S."/>
            <person name="Robinson J."/>
            <person name="White O."/>
            <person name="Rikihisa Y."/>
            <person name="Tettelin H."/>
        </authorList>
    </citation>
    <scope>NUCLEOTIDE SEQUENCE [LARGE SCALE GENOMIC DNA]</scope>
    <source>
        <strain>ATCC CRL-10679 / Arkansas</strain>
    </source>
</reference>
<evidence type="ECO:0000255" key="1">
    <source>
        <dbReference type="HAMAP-Rule" id="MF_01227"/>
    </source>
</evidence>
<comment type="function">
    <text evidence="1">Catalyzes the ATP-dependent amination of UTP to CTP with either L-glutamine or ammonia as the source of nitrogen. Regulates intracellular CTP levels through interactions with the four ribonucleotide triphosphates.</text>
</comment>
<comment type="catalytic activity">
    <reaction evidence="1">
        <text>UTP + L-glutamine + ATP + H2O = CTP + L-glutamate + ADP + phosphate + 2 H(+)</text>
        <dbReference type="Rhea" id="RHEA:26426"/>
        <dbReference type="ChEBI" id="CHEBI:15377"/>
        <dbReference type="ChEBI" id="CHEBI:15378"/>
        <dbReference type="ChEBI" id="CHEBI:29985"/>
        <dbReference type="ChEBI" id="CHEBI:30616"/>
        <dbReference type="ChEBI" id="CHEBI:37563"/>
        <dbReference type="ChEBI" id="CHEBI:43474"/>
        <dbReference type="ChEBI" id="CHEBI:46398"/>
        <dbReference type="ChEBI" id="CHEBI:58359"/>
        <dbReference type="ChEBI" id="CHEBI:456216"/>
        <dbReference type="EC" id="6.3.4.2"/>
    </reaction>
</comment>
<comment type="catalytic activity">
    <reaction evidence="1">
        <text>L-glutamine + H2O = L-glutamate + NH4(+)</text>
        <dbReference type="Rhea" id="RHEA:15889"/>
        <dbReference type="ChEBI" id="CHEBI:15377"/>
        <dbReference type="ChEBI" id="CHEBI:28938"/>
        <dbReference type="ChEBI" id="CHEBI:29985"/>
        <dbReference type="ChEBI" id="CHEBI:58359"/>
    </reaction>
</comment>
<comment type="catalytic activity">
    <reaction evidence="1">
        <text>UTP + NH4(+) + ATP = CTP + ADP + phosphate + 2 H(+)</text>
        <dbReference type="Rhea" id="RHEA:16597"/>
        <dbReference type="ChEBI" id="CHEBI:15378"/>
        <dbReference type="ChEBI" id="CHEBI:28938"/>
        <dbReference type="ChEBI" id="CHEBI:30616"/>
        <dbReference type="ChEBI" id="CHEBI:37563"/>
        <dbReference type="ChEBI" id="CHEBI:43474"/>
        <dbReference type="ChEBI" id="CHEBI:46398"/>
        <dbReference type="ChEBI" id="CHEBI:456216"/>
    </reaction>
</comment>
<comment type="activity regulation">
    <text evidence="1">Allosterically activated by GTP, when glutamine is the substrate; GTP has no effect on the reaction when ammonia is the substrate. The allosteric effector GTP functions by stabilizing the protein conformation that binds the tetrahedral intermediate(s) formed during glutamine hydrolysis. Inhibited by the product CTP, via allosteric rather than competitive inhibition.</text>
</comment>
<comment type="pathway">
    <text evidence="1">Pyrimidine metabolism; CTP biosynthesis via de novo pathway; CTP from UDP: step 2/2.</text>
</comment>
<comment type="subunit">
    <text evidence="1">Homotetramer.</text>
</comment>
<comment type="miscellaneous">
    <text evidence="1">CTPSs have evolved a hybrid strategy for distinguishing between UTP and CTP. The overlapping regions of the product feedback inhibitory and substrate sites recognize a common feature in both compounds, the triphosphate moiety. To differentiate isosteric substrate and product pyrimidine rings, an additional pocket far from the expected kinase/ligase catalytic site, specifically recognizes the cytosine and ribose portions of the product inhibitor.</text>
</comment>
<comment type="similarity">
    <text evidence="1">Belongs to the CTP synthase family.</text>
</comment>
<organism>
    <name type="scientific">Ehrlichia chaffeensis (strain ATCC CRL-10679 / Arkansas)</name>
    <dbReference type="NCBI Taxonomy" id="205920"/>
    <lineage>
        <taxon>Bacteria</taxon>
        <taxon>Pseudomonadati</taxon>
        <taxon>Pseudomonadota</taxon>
        <taxon>Alphaproteobacteria</taxon>
        <taxon>Rickettsiales</taxon>
        <taxon>Anaplasmataceae</taxon>
        <taxon>Ehrlichia</taxon>
    </lineage>
</organism>
<keyword id="KW-0067">ATP-binding</keyword>
<keyword id="KW-0315">Glutamine amidotransferase</keyword>
<keyword id="KW-0436">Ligase</keyword>
<keyword id="KW-0460">Magnesium</keyword>
<keyword id="KW-0479">Metal-binding</keyword>
<keyword id="KW-0547">Nucleotide-binding</keyword>
<keyword id="KW-0665">Pyrimidine biosynthesis</keyword>
<keyword id="KW-1185">Reference proteome</keyword>
<sequence length="532" mass="59824">MNQASTRFIFVTGGVVSSLGKGLAAASIGALLQARGFKICLRKLDPYLNIDPGTMSPIQHGEVFVTDDGAETDLDLGHYERFTGVKTTKNDNITTGKVYHNLLKKERRGDYLGQTVQIIPHVTDLINSFILHDTDKLDFVICEIGGTVGDIESQPFLESIRQIGYKLSKNNTIFVHLTLVPYIDAAMELKTKPTQHSVKELSSVGIQPDIILYRSKIPLSKEQRDKIANLCNVSSTNIIPALDVKNIYELPISYHNYNLDTQILNHFNIDSPEPDLRKWENILNISHAVTKTVNVAIIGKYIKLLDAYKSLIEALEHASIHNKVKLSIKWIDSRSLDSNEINIFDKVDSILIPGGFGDDGIQGKMTAITYARLNKIPFLGICMGMQLAIIEFANNVAHLEDANSTEFNLYCKNPVIHQLPELQQNFLGGSMKLGSCPCYLESGSKIFSIYQQSIIHERRRHRYAFNLQYKDLLEQHGLIFTGKSNNNNDSLIEVIELKDHPWFIGVQFHPEFKSSPFHSHPLFISFIKASLD</sequence>
<accession>Q2GHT7</accession>
<protein>
    <recommendedName>
        <fullName evidence="1">CTP synthase</fullName>
        <ecNumber evidence="1">6.3.4.2</ecNumber>
    </recommendedName>
    <alternativeName>
        <fullName evidence="1">Cytidine 5'-triphosphate synthase</fullName>
    </alternativeName>
    <alternativeName>
        <fullName evidence="1">Cytidine triphosphate synthetase</fullName>
        <shortName evidence="1">CTP synthetase</shortName>
        <shortName evidence="1">CTPS</shortName>
    </alternativeName>
    <alternativeName>
        <fullName evidence="1">UTP--ammonia ligase</fullName>
    </alternativeName>
</protein>